<gene>
    <name type="primary">ggaB</name>
    <name type="ordered locus">BSU35680</name>
</gene>
<proteinExistence type="inferred from homology"/>
<keyword id="KW-0961">Cell wall biogenesis/degradation</keyword>
<keyword id="KW-0328">Glycosyltransferase</keyword>
<keyword id="KW-1185">Reference proteome</keyword>
<keyword id="KW-0777">Teichoic acid biosynthesis</keyword>
<keyword id="KW-0808">Transferase</keyword>
<evidence type="ECO:0000305" key="1"/>
<comment type="function">
    <text>Involved in the biosynthesis of galactosamine-containing minor teichoic acid, a non-essential cell wall polymer in B.subtilis 168.</text>
</comment>
<comment type="pathway">
    <text>Cell wall biogenesis; poly(glucopyranosyl N-acetylgalactosamine 1-phosphate) teichoic acid biosynthesis.</text>
</comment>
<comment type="similarity">
    <text evidence="1">Belongs to the glycosyltransferase 2 family.</text>
</comment>
<accession>P46918</accession>
<protein>
    <recommendedName>
        <fullName>Minor teichoic acid biosynthesis protein GgaB</fullName>
    </recommendedName>
</protein>
<dbReference type="EMBL" id="U13979">
    <property type="protein sequence ID" value="AAA73513.1"/>
    <property type="molecule type" value="Genomic_DNA"/>
</dbReference>
<dbReference type="EMBL" id="AL009126">
    <property type="protein sequence ID" value="CAB15585.1"/>
    <property type="molecule type" value="Genomic_DNA"/>
</dbReference>
<dbReference type="PIR" id="E69631">
    <property type="entry name" value="E69631"/>
</dbReference>
<dbReference type="RefSeq" id="NP_391448.1">
    <property type="nucleotide sequence ID" value="NC_000964.3"/>
</dbReference>
<dbReference type="RefSeq" id="WP_003227939.1">
    <property type="nucleotide sequence ID" value="NZ_OZ025638.1"/>
</dbReference>
<dbReference type="FunCoup" id="P46918">
    <property type="interactions" value="2"/>
</dbReference>
<dbReference type="STRING" id="224308.BSU35680"/>
<dbReference type="CAZy" id="GT2">
    <property type="family name" value="Glycosyltransferase Family 2"/>
</dbReference>
<dbReference type="PaxDb" id="224308-BSU35680"/>
<dbReference type="EnsemblBacteria" id="CAB15585">
    <property type="protein sequence ID" value="CAB15585"/>
    <property type="gene ID" value="BSU_35680"/>
</dbReference>
<dbReference type="GeneID" id="936775"/>
<dbReference type="KEGG" id="bsu:BSU35680"/>
<dbReference type="PATRIC" id="fig|224308.179.peg.3860"/>
<dbReference type="eggNOG" id="COG1215">
    <property type="taxonomic scope" value="Bacteria"/>
</dbReference>
<dbReference type="eggNOG" id="COG1887">
    <property type="taxonomic scope" value="Bacteria"/>
</dbReference>
<dbReference type="InParanoid" id="P46918"/>
<dbReference type="OrthoDB" id="396512at2"/>
<dbReference type="BioCyc" id="BSUB:BSU35680-MONOMER"/>
<dbReference type="BioCyc" id="MetaCyc:BSU35680-MONOMER"/>
<dbReference type="UniPathway" id="UPA00789"/>
<dbReference type="Proteomes" id="UP000001570">
    <property type="component" value="Chromosome"/>
</dbReference>
<dbReference type="GO" id="GO:0016020">
    <property type="term" value="C:membrane"/>
    <property type="evidence" value="ECO:0007669"/>
    <property type="project" value="InterPro"/>
</dbReference>
<dbReference type="GO" id="GO:0047355">
    <property type="term" value="F:CDP-glycerol glycerophosphotransferase activity"/>
    <property type="evidence" value="ECO:0007669"/>
    <property type="project" value="InterPro"/>
</dbReference>
<dbReference type="GO" id="GO:0016757">
    <property type="term" value="F:glycosyltransferase activity"/>
    <property type="evidence" value="ECO:0000318"/>
    <property type="project" value="GO_Central"/>
</dbReference>
<dbReference type="GO" id="GO:0016758">
    <property type="term" value="F:hexosyltransferase activity"/>
    <property type="evidence" value="ECO:0007669"/>
    <property type="project" value="UniProtKB-ARBA"/>
</dbReference>
<dbReference type="GO" id="GO:0071555">
    <property type="term" value="P:cell wall organization"/>
    <property type="evidence" value="ECO:0007669"/>
    <property type="project" value="UniProtKB-KW"/>
</dbReference>
<dbReference type="GO" id="GO:0019350">
    <property type="term" value="P:teichoic acid biosynthetic process"/>
    <property type="evidence" value="ECO:0007669"/>
    <property type="project" value="UniProtKB-KW"/>
</dbReference>
<dbReference type="CDD" id="cd00761">
    <property type="entry name" value="Glyco_tranf_GTA_type"/>
    <property type="match status" value="1"/>
</dbReference>
<dbReference type="Gene3D" id="3.40.50.12580">
    <property type="match status" value="1"/>
</dbReference>
<dbReference type="Gene3D" id="3.90.550.10">
    <property type="entry name" value="Spore Coat Polysaccharide Biosynthesis Protein SpsA, Chain A"/>
    <property type="match status" value="1"/>
</dbReference>
<dbReference type="InterPro" id="IPR007554">
    <property type="entry name" value="Glycerophosphate_synth"/>
</dbReference>
<dbReference type="InterPro" id="IPR001173">
    <property type="entry name" value="Glyco_trans_2-like"/>
</dbReference>
<dbReference type="InterPro" id="IPR029044">
    <property type="entry name" value="Nucleotide-diphossugar_trans"/>
</dbReference>
<dbReference type="InterPro" id="IPR043148">
    <property type="entry name" value="TagF_C"/>
</dbReference>
<dbReference type="PANTHER" id="PTHR22916">
    <property type="entry name" value="GLYCOSYLTRANSFERASE"/>
    <property type="match status" value="1"/>
</dbReference>
<dbReference type="PANTHER" id="PTHR22916:SF3">
    <property type="entry name" value="UDP-GLCNAC:BETAGAL BETA-1,3-N-ACETYLGLUCOSAMINYLTRANSFERASE-LIKE PROTEIN 1"/>
    <property type="match status" value="1"/>
</dbReference>
<dbReference type="Pfam" id="PF00535">
    <property type="entry name" value="Glycos_transf_2"/>
    <property type="match status" value="1"/>
</dbReference>
<dbReference type="Pfam" id="PF04464">
    <property type="entry name" value="Glyphos_transf"/>
    <property type="match status" value="1"/>
</dbReference>
<dbReference type="SUPFAM" id="SSF53448">
    <property type="entry name" value="Nucleotide-diphospho-sugar transferases"/>
    <property type="match status" value="1"/>
</dbReference>
<dbReference type="SUPFAM" id="SSF53756">
    <property type="entry name" value="UDP-Glycosyltransferase/glycogen phosphorylase"/>
    <property type="match status" value="1"/>
</dbReference>
<feature type="chain" id="PRO_0000059188" description="Minor teichoic acid biosynthesis protein GgaB">
    <location>
        <begin position="1"/>
        <end position="900"/>
    </location>
</feature>
<organism>
    <name type="scientific">Bacillus subtilis (strain 168)</name>
    <dbReference type="NCBI Taxonomy" id="224308"/>
    <lineage>
        <taxon>Bacteria</taxon>
        <taxon>Bacillati</taxon>
        <taxon>Bacillota</taxon>
        <taxon>Bacilli</taxon>
        <taxon>Bacillales</taxon>
        <taxon>Bacillaceae</taxon>
        <taxon>Bacillus</taxon>
    </lineage>
</organism>
<reference key="1">
    <citation type="submission" date="1994-08" db="EMBL/GenBank/DDBJ databases">
        <title>Sequencing and analysis of two gga genes associated with the synthesis of the minor teichoic acid of Bacillus subbtilis 168.</title>
        <authorList>
            <person name="Freymond P.-P."/>
            <person name="Karamata D."/>
        </authorList>
    </citation>
    <scope>NUCLEOTIDE SEQUENCE [GENOMIC DNA]</scope>
    <source>
        <strain>168</strain>
    </source>
</reference>
<reference key="2">
    <citation type="journal article" date="1997" name="Nature">
        <title>The complete genome sequence of the Gram-positive bacterium Bacillus subtilis.</title>
        <authorList>
            <person name="Kunst F."/>
            <person name="Ogasawara N."/>
            <person name="Moszer I."/>
            <person name="Albertini A.M."/>
            <person name="Alloni G."/>
            <person name="Azevedo V."/>
            <person name="Bertero M.G."/>
            <person name="Bessieres P."/>
            <person name="Bolotin A."/>
            <person name="Borchert S."/>
            <person name="Borriss R."/>
            <person name="Boursier L."/>
            <person name="Brans A."/>
            <person name="Braun M."/>
            <person name="Brignell S.C."/>
            <person name="Bron S."/>
            <person name="Brouillet S."/>
            <person name="Bruschi C.V."/>
            <person name="Caldwell B."/>
            <person name="Capuano V."/>
            <person name="Carter N.M."/>
            <person name="Choi S.-K."/>
            <person name="Codani J.-J."/>
            <person name="Connerton I.F."/>
            <person name="Cummings N.J."/>
            <person name="Daniel R.A."/>
            <person name="Denizot F."/>
            <person name="Devine K.M."/>
            <person name="Duesterhoeft A."/>
            <person name="Ehrlich S.D."/>
            <person name="Emmerson P.T."/>
            <person name="Entian K.-D."/>
            <person name="Errington J."/>
            <person name="Fabret C."/>
            <person name="Ferrari E."/>
            <person name="Foulger D."/>
            <person name="Fritz C."/>
            <person name="Fujita M."/>
            <person name="Fujita Y."/>
            <person name="Fuma S."/>
            <person name="Galizzi A."/>
            <person name="Galleron N."/>
            <person name="Ghim S.-Y."/>
            <person name="Glaser P."/>
            <person name="Goffeau A."/>
            <person name="Golightly E.J."/>
            <person name="Grandi G."/>
            <person name="Guiseppi G."/>
            <person name="Guy B.J."/>
            <person name="Haga K."/>
            <person name="Haiech J."/>
            <person name="Harwood C.R."/>
            <person name="Henaut A."/>
            <person name="Hilbert H."/>
            <person name="Holsappel S."/>
            <person name="Hosono S."/>
            <person name="Hullo M.-F."/>
            <person name="Itaya M."/>
            <person name="Jones L.-M."/>
            <person name="Joris B."/>
            <person name="Karamata D."/>
            <person name="Kasahara Y."/>
            <person name="Klaerr-Blanchard M."/>
            <person name="Klein C."/>
            <person name="Kobayashi Y."/>
            <person name="Koetter P."/>
            <person name="Koningstein G."/>
            <person name="Krogh S."/>
            <person name="Kumano M."/>
            <person name="Kurita K."/>
            <person name="Lapidus A."/>
            <person name="Lardinois S."/>
            <person name="Lauber J."/>
            <person name="Lazarevic V."/>
            <person name="Lee S.-M."/>
            <person name="Levine A."/>
            <person name="Liu H."/>
            <person name="Masuda S."/>
            <person name="Mauel C."/>
            <person name="Medigue C."/>
            <person name="Medina N."/>
            <person name="Mellado R.P."/>
            <person name="Mizuno M."/>
            <person name="Moestl D."/>
            <person name="Nakai S."/>
            <person name="Noback M."/>
            <person name="Noone D."/>
            <person name="O'Reilly M."/>
            <person name="Ogawa K."/>
            <person name="Ogiwara A."/>
            <person name="Oudega B."/>
            <person name="Park S.-H."/>
            <person name="Parro V."/>
            <person name="Pohl T.M."/>
            <person name="Portetelle D."/>
            <person name="Porwollik S."/>
            <person name="Prescott A.M."/>
            <person name="Presecan E."/>
            <person name="Pujic P."/>
            <person name="Purnelle B."/>
            <person name="Rapoport G."/>
            <person name="Rey M."/>
            <person name="Reynolds S."/>
            <person name="Rieger M."/>
            <person name="Rivolta C."/>
            <person name="Rocha E."/>
            <person name="Roche B."/>
            <person name="Rose M."/>
            <person name="Sadaie Y."/>
            <person name="Sato T."/>
            <person name="Scanlan E."/>
            <person name="Schleich S."/>
            <person name="Schroeter R."/>
            <person name="Scoffone F."/>
            <person name="Sekiguchi J."/>
            <person name="Sekowska A."/>
            <person name="Seror S.J."/>
            <person name="Serror P."/>
            <person name="Shin B.-S."/>
            <person name="Soldo B."/>
            <person name="Sorokin A."/>
            <person name="Tacconi E."/>
            <person name="Takagi T."/>
            <person name="Takahashi H."/>
            <person name="Takemaru K."/>
            <person name="Takeuchi M."/>
            <person name="Tamakoshi A."/>
            <person name="Tanaka T."/>
            <person name="Terpstra P."/>
            <person name="Tognoni A."/>
            <person name="Tosato V."/>
            <person name="Uchiyama S."/>
            <person name="Vandenbol M."/>
            <person name="Vannier F."/>
            <person name="Vassarotti A."/>
            <person name="Viari A."/>
            <person name="Wambutt R."/>
            <person name="Wedler E."/>
            <person name="Wedler H."/>
            <person name="Weitzenegger T."/>
            <person name="Winters P."/>
            <person name="Wipat A."/>
            <person name="Yamamoto H."/>
            <person name="Yamane K."/>
            <person name="Yasumoto K."/>
            <person name="Yata K."/>
            <person name="Yoshida K."/>
            <person name="Yoshikawa H.-F."/>
            <person name="Zumstein E."/>
            <person name="Yoshikawa H."/>
            <person name="Danchin A."/>
        </authorList>
    </citation>
    <scope>NUCLEOTIDE SEQUENCE [LARGE SCALE GENOMIC DNA]</scope>
    <source>
        <strain>168</strain>
    </source>
</reference>
<sequence length="900" mass="107155">MNEKSFNYDFSVIMPIYNVELYLTEAIESIINQTIGFENIQLILVNDDSPDKSEIICKEYAQKYPNNIVYAKKQNGGVSSARNYGLKYAEGRYIQFLDPDDLVSEGTFENVLNFFDEHKNEIDIVAIPIFFAEGRTGEHNLNNKFSSTRILDVEKEPHHILTHCCSTFIKKDALKNIRFDENCKIGEDAKLVNLIISQKKKYGLVKEAKYHYRVREDGSSAMQTAKANKNWFNHSLITFSKNLIDIIKNHEQKIPLFLQYMVMHDLKWKLLIKDISETPLDENEYSEFLTLIREVLSYIDDDVIIETKSVSHFYLYHALKIKHGENYSRYVYERETEQDYYLYREGKIVSKLSDQTLTIEILEENEDSIHIEGFWSSLFNSKGFKFYAKIGETKIKAKNIKRQHNDYISLGEVIKKYPGFSIDIPKGHLADNHHIEFFITKGKKRKLTKLRFFKYSGLSNDLYNTYVAKKDYIFYYNYKKLMFKKNNFKNRFIKEFRFLKSLHKSGEKSKKRKSAIKKALMARMVHHVFTIFNRKPVWLFIDRQDKADDNAEHLFKYAINKNDGVKKYFIIKKDSKDYDRIKKYGKVIPYRSFRHKILTLSSSKVISTHADIWVVNPFFNMEIYFRDLFNFEFIFLQHGITMADHSEWLNKYNKNIKLLVTSAKPEYRSIVKGNYNYKKENILLGGFPRYDNLKKSEGEKQLLIMPTWRKDIVLPKDQAKGVRPYNPKFKDSEYFSRYNALINDERLIEFAKKNNYKITFFPHPDIQQQIVDFEKHDYVEFADYNSSYQMLFNSSNIMITDFSSVAFDFAYEKKPVIYYQYEKSYHFKLDYYDYKKMGFGDVLENHNSLVDKVIYYMKNNSRMEDKYRKRVDNFFAYTDKNNRNRIYNAILELDNNKVAK</sequence>
<name>GGAB_BACSU</name>